<protein>
    <recommendedName>
        <fullName evidence="1">UPF0391 membrane protein YtjA</fullName>
    </recommendedName>
</protein>
<keyword id="KW-1003">Cell membrane</keyword>
<keyword id="KW-0472">Membrane</keyword>
<keyword id="KW-0812">Transmembrane</keyword>
<keyword id="KW-1133">Transmembrane helix</keyword>
<proteinExistence type="inferred from homology"/>
<reference key="1">
    <citation type="journal article" date="2011" name="J. Bacteriol.">
        <title>Comparative genomics of 28 Salmonella enterica isolates: evidence for CRISPR-mediated adaptive sublineage evolution.</title>
        <authorList>
            <person name="Fricke W.F."/>
            <person name="Mammel M.K."/>
            <person name="McDermott P.F."/>
            <person name="Tartera C."/>
            <person name="White D.G."/>
            <person name="Leclerc J.E."/>
            <person name="Ravel J."/>
            <person name="Cebula T.A."/>
        </authorList>
    </citation>
    <scope>NUCLEOTIDE SEQUENCE [LARGE SCALE GENOMIC DNA]</scope>
    <source>
        <strain>SL483</strain>
    </source>
</reference>
<evidence type="ECO:0000255" key="1">
    <source>
        <dbReference type="HAMAP-Rule" id="MF_01361"/>
    </source>
</evidence>
<feature type="chain" id="PRO_1000143721" description="UPF0391 membrane protein YtjA">
    <location>
        <begin position="1"/>
        <end position="53"/>
    </location>
</feature>
<feature type="transmembrane region" description="Helical" evidence="1">
    <location>
        <begin position="4"/>
        <end position="24"/>
    </location>
</feature>
<feature type="transmembrane region" description="Helical" evidence="1">
    <location>
        <begin position="30"/>
        <end position="48"/>
    </location>
</feature>
<name>YTJA_SALA4</name>
<accession>B5F518</accession>
<comment type="subcellular location">
    <subcellularLocation>
        <location evidence="1">Cell membrane</location>
        <topology evidence="1">Multi-pass membrane protein</topology>
    </subcellularLocation>
</comment>
<comment type="similarity">
    <text evidence="1">Belongs to the UPF0391 family.</text>
</comment>
<organism>
    <name type="scientific">Salmonella agona (strain SL483)</name>
    <dbReference type="NCBI Taxonomy" id="454166"/>
    <lineage>
        <taxon>Bacteria</taxon>
        <taxon>Pseudomonadati</taxon>
        <taxon>Pseudomonadota</taxon>
        <taxon>Gammaproteobacteria</taxon>
        <taxon>Enterobacterales</taxon>
        <taxon>Enterobacteriaceae</taxon>
        <taxon>Salmonella</taxon>
    </lineage>
</organism>
<sequence length="53" mass="5522">MFRWGIIFLVIALIAAALGFGGLAGTAAGAAKIVFVVGIVLFLVSLFMGRKRP</sequence>
<gene>
    <name evidence="1" type="primary">ytjA</name>
    <name type="ordered locus">SeAg_B4883</name>
</gene>
<dbReference type="EMBL" id="CP001138">
    <property type="protein sequence ID" value="ACH48696.1"/>
    <property type="molecule type" value="Genomic_DNA"/>
</dbReference>
<dbReference type="RefSeq" id="WP_000490276.1">
    <property type="nucleotide sequence ID" value="NC_011149.1"/>
</dbReference>
<dbReference type="KEGG" id="sea:SeAg_B4883"/>
<dbReference type="HOGENOM" id="CLU_187346_2_0_6"/>
<dbReference type="Proteomes" id="UP000008819">
    <property type="component" value="Chromosome"/>
</dbReference>
<dbReference type="GO" id="GO:0005886">
    <property type="term" value="C:plasma membrane"/>
    <property type="evidence" value="ECO:0007669"/>
    <property type="project" value="UniProtKB-SubCell"/>
</dbReference>
<dbReference type="HAMAP" id="MF_01361">
    <property type="entry name" value="UPF0391"/>
    <property type="match status" value="1"/>
</dbReference>
<dbReference type="InterPro" id="IPR009760">
    <property type="entry name" value="DUF1328"/>
</dbReference>
<dbReference type="NCBIfam" id="NF010229">
    <property type="entry name" value="PRK13682.1-4"/>
    <property type="match status" value="1"/>
</dbReference>
<dbReference type="NCBIfam" id="NF010230">
    <property type="entry name" value="PRK13682.1-5"/>
    <property type="match status" value="1"/>
</dbReference>
<dbReference type="Pfam" id="PF07043">
    <property type="entry name" value="DUF1328"/>
    <property type="match status" value="1"/>
</dbReference>
<dbReference type="PIRSF" id="PIRSF036466">
    <property type="entry name" value="UCP036466"/>
    <property type="match status" value="1"/>
</dbReference>